<organism>
    <name type="scientific">Yersinia pestis bv. Antiqua (strain Antiqua)</name>
    <dbReference type="NCBI Taxonomy" id="360102"/>
    <lineage>
        <taxon>Bacteria</taxon>
        <taxon>Pseudomonadati</taxon>
        <taxon>Pseudomonadota</taxon>
        <taxon>Gammaproteobacteria</taxon>
        <taxon>Enterobacterales</taxon>
        <taxon>Yersiniaceae</taxon>
        <taxon>Yersinia</taxon>
    </lineage>
</organism>
<feature type="chain" id="PRO_1000011987" description="Diaminopimelate epimerase">
    <location>
        <begin position="1"/>
        <end position="274"/>
    </location>
</feature>
<feature type="active site" description="Proton donor" evidence="1">
    <location>
        <position position="73"/>
    </location>
</feature>
<feature type="active site" description="Proton acceptor" evidence="1">
    <location>
        <position position="217"/>
    </location>
</feature>
<feature type="binding site" evidence="1">
    <location>
        <position position="11"/>
    </location>
    <ligand>
        <name>substrate</name>
    </ligand>
</feature>
<feature type="binding site" evidence="1">
    <location>
        <position position="44"/>
    </location>
    <ligand>
        <name>substrate</name>
    </ligand>
</feature>
<feature type="binding site" evidence="1">
    <location>
        <position position="64"/>
    </location>
    <ligand>
        <name>substrate</name>
    </ligand>
</feature>
<feature type="binding site" evidence="1">
    <location>
        <begin position="74"/>
        <end position="75"/>
    </location>
    <ligand>
        <name>substrate</name>
    </ligand>
</feature>
<feature type="binding site" evidence="1">
    <location>
        <position position="157"/>
    </location>
    <ligand>
        <name>substrate</name>
    </ligand>
</feature>
<feature type="binding site" evidence="1">
    <location>
        <position position="190"/>
    </location>
    <ligand>
        <name>substrate</name>
    </ligand>
</feature>
<feature type="binding site" evidence="1">
    <location>
        <begin position="208"/>
        <end position="209"/>
    </location>
    <ligand>
        <name>substrate</name>
    </ligand>
</feature>
<feature type="binding site" evidence="1">
    <location>
        <begin position="218"/>
        <end position="219"/>
    </location>
    <ligand>
        <name>substrate</name>
    </ligand>
</feature>
<feature type="site" description="Could be important to modulate the pK values of the two catalytic cysteine residues" evidence="1">
    <location>
        <position position="159"/>
    </location>
</feature>
<feature type="site" description="Could be important to modulate the pK values of the two catalytic cysteine residues" evidence="1">
    <location>
        <position position="208"/>
    </location>
</feature>
<feature type="site" description="Important for dimerization" evidence="1">
    <location>
        <position position="268"/>
    </location>
</feature>
<evidence type="ECO:0000255" key="1">
    <source>
        <dbReference type="HAMAP-Rule" id="MF_00197"/>
    </source>
</evidence>
<reference key="1">
    <citation type="journal article" date="2006" name="J. Bacteriol.">
        <title>Complete genome sequence of Yersinia pestis strains Antiqua and Nepal516: evidence of gene reduction in an emerging pathogen.</title>
        <authorList>
            <person name="Chain P.S.G."/>
            <person name="Hu P."/>
            <person name="Malfatti S.A."/>
            <person name="Radnedge L."/>
            <person name="Larimer F."/>
            <person name="Vergez L.M."/>
            <person name="Worsham P."/>
            <person name="Chu M.C."/>
            <person name="Andersen G.L."/>
        </authorList>
    </citation>
    <scope>NUCLEOTIDE SEQUENCE [LARGE SCALE GENOMIC DNA]</scope>
    <source>
        <strain>Antiqua</strain>
    </source>
</reference>
<comment type="function">
    <text evidence="1">Catalyzes the stereoinversion of LL-2,6-diaminopimelate (L,L-DAP) to meso-diaminopimelate (meso-DAP), a precursor of L-lysine and an essential component of the bacterial peptidoglycan.</text>
</comment>
<comment type="catalytic activity">
    <reaction evidence="1">
        <text>(2S,6S)-2,6-diaminopimelate = meso-2,6-diaminopimelate</text>
        <dbReference type="Rhea" id="RHEA:15393"/>
        <dbReference type="ChEBI" id="CHEBI:57609"/>
        <dbReference type="ChEBI" id="CHEBI:57791"/>
        <dbReference type="EC" id="5.1.1.7"/>
    </reaction>
</comment>
<comment type="pathway">
    <text evidence="1">Amino-acid biosynthesis; L-lysine biosynthesis via DAP pathway; DL-2,6-diaminopimelate from LL-2,6-diaminopimelate: step 1/1.</text>
</comment>
<comment type="subunit">
    <text evidence="1">Homodimer.</text>
</comment>
<comment type="subcellular location">
    <subcellularLocation>
        <location evidence="1">Cytoplasm</location>
    </subcellularLocation>
</comment>
<comment type="similarity">
    <text evidence="1">Belongs to the diaminopimelate epimerase family.</text>
</comment>
<accession>Q1CBM6</accession>
<keyword id="KW-0028">Amino-acid biosynthesis</keyword>
<keyword id="KW-0963">Cytoplasm</keyword>
<keyword id="KW-0413">Isomerase</keyword>
<keyword id="KW-0457">Lysine biosynthesis</keyword>
<protein>
    <recommendedName>
        <fullName evidence="1">Diaminopimelate epimerase</fullName>
        <shortName evidence="1">DAP epimerase</shortName>
        <ecNumber evidence="1">5.1.1.7</ecNumber>
    </recommendedName>
    <alternativeName>
        <fullName evidence="1">PLP-independent amino acid racemase</fullName>
    </alternativeName>
</protein>
<name>DAPF_YERPA</name>
<proteinExistence type="inferred from homology"/>
<sequence length="274" mass="30252">MQFSKMHGLGNDFMVVDAVTQNVYFSPELIRRLADRHTGVGFDQMLVVEPPYDPELDFHYRIFNADGSEVSQCGNGARCFARFVRLKGLTNKREISVSTQTGRMILSVTEDEQVCVNMGEPDFEPQTVPFRAAKAEKTYILRAAEHTVLCGVVSMGNPHCVMQVDDVSVANVALLGPVLENHERFPERANIGFMQVVSRDHIRLRVYERGAGETQACGSGACAAVAVGVVQDLLNENVHVELPGGSLHIRWQGPGHPLYMTGPATHVYDGFIHL</sequence>
<gene>
    <name evidence="1" type="primary">dapF</name>
    <name type="ordered locus">YPA_0177</name>
</gene>
<dbReference type="EC" id="5.1.1.7" evidence="1"/>
<dbReference type="EMBL" id="CP000308">
    <property type="protein sequence ID" value="ABG12146.1"/>
    <property type="molecule type" value="Genomic_DNA"/>
</dbReference>
<dbReference type="RefSeq" id="WP_002211471.1">
    <property type="nucleotide sequence ID" value="NZ_CP009906.1"/>
</dbReference>
<dbReference type="SMR" id="Q1CBM6"/>
<dbReference type="GeneID" id="57974864"/>
<dbReference type="KEGG" id="ypa:YPA_0177"/>
<dbReference type="UniPathway" id="UPA00034">
    <property type="reaction ID" value="UER00025"/>
</dbReference>
<dbReference type="Proteomes" id="UP000001971">
    <property type="component" value="Chromosome"/>
</dbReference>
<dbReference type="GO" id="GO:0005829">
    <property type="term" value="C:cytosol"/>
    <property type="evidence" value="ECO:0007669"/>
    <property type="project" value="TreeGrafter"/>
</dbReference>
<dbReference type="GO" id="GO:0008837">
    <property type="term" value="F:diaminopimelate epimerase activity"/>
    <property type="evidence" value="ECO:0007669"/>
    <property type="project" value="UniProtKB-UniRule"/>
</dbReference>
<dbReference type="GO" id="GO:0009089">
    <property type="term" value="P:lysine biosynthetic process via diaminopimelate"/>
    <property type="evidence" value="ECO:0007669"/>
    <property type="project" value="UniProtKB-UniRule"/>
</dbReference>
<dbReference type="FunFam" id="3.10.310.10:FF:000001">
    <property type="entry name" value="Diaminopimelate epimerase"/>
    <property type="match status" value="1"/>
</dbReference>
<dbReference type="FunFam" id="3.10.310.10:FF:000002">
    <property type="entry name" value="Diaminopimelate epimerase"/>
    <property type="match status" value="1"/>
</dbReference>
<dbReference type="Gene3D" id="3.10.310.10">
    <property type="entry name" value="Diaminopimelate Epimerase, Chain A, domain 1"/>
    <property type="match status" value="2"/>
</dbReference>
<dbReference type="HAMAP" id="MF_00197">
    <property type="entry name" value="DAP_epimerase"/>
    <property type="match status" value="1"/>
</dbReference>
<dbReference type="InterPro" id="IPR018510">
    <property type="entry name" value="DAP_epimerase_AS"/>
</dbReference>
<dbReference type="InterPro" id="IPR001653">
    <property type="entry name" value="DAP_epimerase_DapF"/>
</dbReference>
<dbReference type="NCBIfam" id="TIGR00652">
    <property type="entry name" value="DapF"/>
    <property type="match status" value="1"/>
</dbReference>
<dbReference type="PANTHER" id="PTHR31689:SF0">
    <property type="entry name" value="DIAMINOPIMELATE EPIMERASE"/>
    <property type="match status" value="1"/>
</dbReference>
<dbReference type="PANTHER" id="PTHR31689">
    <property type="entry name" value="DIAMINOPIMELATE EPIMERASE, CHLOROPLASTIC"/>
    <property type="match status" value="1"/>
</dbReference>
<dbReference type="Pfam" id="PF01678">
    <property type="entry name" value="DAP_epimerase"/>
    <property type="match status" value="2"/>
</dbReference>
<dbReference type="SUPFAM" id="SSF54506">
    <property type="entry name" value="Diaminopimelate epimerase-like"/>
    <property type="match status" value="1"/>
</dbReference>
<dbReference type="PROSITE" id="PS01326">
    <property type="entry name" value="DAP_EPIMERASE"/>
    <property type="match status" value="1"/>
</dbReference>